<feature type="chain" id="PRO_0000316408" description="Photosystem II protein D1 3" evidence="1">
    <location>
        <begin position="1"/>
        <end position="344"/>
    </location>
</feature>
<feature type="propeptide" id="PRO_0000316409" evidence="1">
    <location>
        <begin position="345"/>
        <end position="354"/>
    </location>
</feature>
<feature type="transmembrane region" description="Helical" evidence="1">
    <location>
        <begin position="29"/>
        <end position="46"/>
    </location>
</feature>
<feature type="transmembrane region" description="Helical" evidence="1">
    <location>
        <begin position="118"/>
        <end position="133"/>
    </location>
</feature>
<feature type="transmembrane region" description="Helical" evidence="1">
    <location>
        <begin position="142"/>
        <end position="156"/>
    </location>
</feature>
<feature type="transmembrane region" description="Helical" evidence="1">
    <location>
        <begin position="197"/>
        <end position="218"/>
    </location>
</feature>
<feature type="transmembrane region" description="Helical" evidence="1">
    <location>
        <begin position="274"/>
        <end position="288"/>
    </location>
</feature>
<feature type="binding site" description="axial binding residue" evidence="1">
    <location>
        <position position="118"/>
    </location>
    <ligand>
        <name>chlorophyll a</name>
        <dbReference type="ChEBI" id="CHEBI:58416"/>
        <label>ChlzD1</label>
    </ligand>
    <ligandPart>
        <name>Mg</name>
        <dbReference type="ChEBI" id="CHEBI:25107"/>
    </ligandPart>
</feature>
<feature type="binding site" evidence="1">
    <location>
        <position position="126"/>
    </location>
    <ligand>
        <name>pheophytin a</name>
        <dbReference type="ChEBI" id="CHEBI:136840"/>
        <label>D1</label>
    </ligand>
</feature>
<feature type="binding site" evidence="1">
    <location>
        <position position="170"/>
    </location>
    <ligand>
        <name>[CaMn4O5] cluster</name>
        <dbReference type="ChEBI" id="CHEBI:189552"/>
    </ligand>
</feature>
<feature type="binding site" evidence="1">
    <location>
        <position position="189"/>
    </location>
    <ligand>
        <name>[CaMn4O5] cluster</name>
        <dbReference type="ChEBI" id="CHEBI:189552"/>
    </ligand>
</feature>
<feature type="binding site" description="axial binding residue" evidence="1">
    <location>
        <position position="198"/>
    </location>
    <ligand>
        <name>chlorophyll a</name>
        <dbReference type="ChEBI" id="CHEBI:58416"/>
        <label>PD1</label>
    </ligand>
    <ligandPart>
        <name>Mg</name>
        <dbReference type="ChEBI" id="CHEBI:25107"/>
    </ligandPart>
</feature>
<feature type="binding site" evidence="1">
    <location>
        <position position="215"/>
    </location>
    <ligand>
        <name>a quinone</name>
        <dbReference type="ChEBI" id="CHEBI:132124"/>
        <label>B</label>
    </ligand>
</feature>
<feature type="binding site" evidence="1">
    <location>
        <position position="215"/>
    </location>
    <ligand>
        <name>Fe cation</name>
        <dbReference type="ChEBI" id="CHEBI:24875"/>
        <note>ligand shared with heterodimeric partner</note>
    </ligand>
</feature>
<feature type="binding site" evidence="1">
    <location>
        <begin position="264"/>
        <end position="265"/>
    </location>
    <ligand>
        <name>a quinone</name>
        <dbReference type="ChEBI" id="CHEBI:132124"/>
        <label>B</label>
    </ligand>
</feature>
<feature type="binding site" evidence="1">
    <location>
        <position position="272"/>
    </location>
    <ligand>
        <name>Fe cation</name>
        <dbReference type="ChEBI" id="CHEBI:24875"/>
        <note>ligand shared with heterodimeric partner</note>
    </ligand>
</feature>
<feature type="binding site" evidence="1">
    <location>
        <position position="332"/>
    </location>
    <ligand>
        <name>[CaMn4O5] cluster</name>
        <dbReference type="ChEBI" id="CHEBI:189552"/>
    </ligand>
</feature>
<feature type="binding site" evidence="1">
    <location>
        <position position="333"/>
    </location>
    <ligand>
        <name>[CaMn4O5] cluster</name>
        <dbReference type="ChEBI" id="CHEBI:189552"/>
    </ligand>
</feature>
<feature type="binding site" evidence="1">
    <location>
        <position position="342"/>
    </location>
    <ligand>
        <name>[CaMn4O5] cluster</name>
        <dbReference type="ChEBI" id="CHEBI:189552"/>
    </ligand>
</feature>
<feature type="binding site" evidence="1">
    <location>
        <position position="344"/>
    </location>
    <ligand>
        <name>[CaMn4O5] cluster</name>
        <dbReference type="ChEBI" id="CHEBI:189552"/>
    </ligand>
</feature>
<feature type="site" description="Tyrosine radical intermediate" evidence="1">
    <location>
        <position position="161"/>
    </location>
</feature>
<feature type="site" description="Stabilizes free radical intermediate" evidence="1">
    <location>
        <position position="190"/>
    </location>
</feature>
<feature type="site" description="Cleavage; by CtpA" evidence="1">
    <location>
        <begin position="344"/>
        <end position="345"/>
    </location>
</feature>
<proteinExistence type="inferred from homology"/>
<dbReference type="EC" id="1.10.3.9" evidence="1"/>
<dbReference type="EMBL" id="CP000239">
    <property type="protein sequence ID" value="ABC99964.1"/>
    <property type="molecule type" value="Genomic_DNA"/>
</dbReference>
<dbReference type="SMR" id="Q2JTM8"/>
<dbReference type="STRING" id="321327.CYA_1811"/>
<dbReference type="KEGG" id="cya:CYA_1811"/>
<dbReference type="eggNOG" id="ENOG502Z87P">
    <property type="taxonomic scope" value="Bacteria"/>
</dbReference>
<dbReference type="HOGENOM" id="CLU_054206_1_0_3"/>
<dbReference type="OrthoDB" id="505356at2"/>
<dbReference type="Proteomes" id="UP000008818">
    <property type="component" value="Chromosome"/>
</dbReference>
<dbReference type="GO" id="GO:0009523">
    <property type="term" value="C:photosystem II"/>
    <property type="evidence" value="ECO:0007669"/>
    <property type="project" value="UniProtKB-KW"/>
</dbReference>
<dbReference type="GO" id="GO:0031676">
    <property type="term" value="C:plasma membrane-derived thylakoid membrane"/>
    <property type="evidence" value="ECO:0007669"/>
    <property type="project" value="UniProtKB-SubCell"/>
</dbReference>
<dbReference type="GO" id="GO:0016168">
    <property type="term" value="F:chlorophyll binding"/>
    <property type="evidence" value="ECO:0007669"/>
    <property type="project" value="UniProtKB-UniRule"/>
</dbReference>
<dbReference type="GO" id="GO:0045156">
    <property type="term" value="F:electron transporter, transferring electrons within the cyclic electron transport pathway of photosynthesis activity"/>
    <property type="evidence" value="ECO:0007669"/>
    <property type="project" value="InterPro"/>
</dbReference>
<dbReference type="GO" id="GO:0005506">
    <property type="term" value="F:iron ion binding"/>
    <property type="evidence" value="ECO:0007669"/>
    <property type="project" value="UniProtKB-UniRule"/>
</dbReference>
<dbReference type="GO" id="GO:0016682">
    <property type="term" value="F:oxidoreductase activity, acting on diphenols and related substances as donors, oxygen as acceptor"/>
    <property type="evidence" value="ECO:0007669"/>
    <property type="project" value="UniProtKB-UniRule"/>
</dbReference>
<dbReference type="GO" id="GO:0010242">
    <property type="term" value="F:oxygen evolving activity"/>
    <property type="evidence" value="ECO:0007669"/>
    <property type="project" value="UniProtKB-EC"/>
</dbReference>
<dbReference type="GO" id="GO:0009772">
    <property type="term" value="P:photosynthetic electron transport in photosystem II"/>
    <property type="evidence" value="ECO:0007669"/>
    <property type="project" value="InterPro"/>
</dbReference>
<dbReference type="GO" id="GO:0009635">
    <property type="term" value="P:response to herbicide"/>
    <property type="evidence" value="ECO:0007669"/>
    <property type="project" value="UniProtKB-KW"/>
</dbReference>
<dbReference type="CDD" id="cd09289">
    <property type="entry name" value="Photosystem-II_D1"/>
    <property type="match status" value="1"/>
</dbReference>
<dbReference type="FunFam" id="1.20.85.10:FF:000002">
    <property type="entry name" value="Photosystem II protein D1"/>
    <property type="match status" value="1"/>
</dbReference>
<dbReference type="Gene3D" id="1.20.85.10">
    <property type="entry name" value="Photosystem II protein D1-like"/>
    <property type="match status" value="1"/>
</dbReference>
<dbReference type="HAMAP" id="MF_01379">
    <property type="entry name" value="PSII_PsbA_D1"/>
    <property type="match status" value="1"/>
</dbReference>
<dbReference type="InterPro" id="IPR055266">
    <property type="entry name" value="D1/D2"/>
</dbReference>
<dbReference type="InterPro" id="IPR036854">
    <property type="entry name" value="Photo_II_D1/D2_sf"/>
</dbReference>
<dbReference type="InterPro" id="IPR000484">
    <property type="entry name" value="Photo_RC_L/M"/>
</dbReference>
<dbReference type="InterPro" id="IPR055265">
    <property type="entry name" value="Photo_RC_L/M_CS"/>
</dbReference>
<dbReference type="InterPro" id="IPR005867">
    <property type="entry name" value="PSII_D1"/>
</dbReference>
<dbReference type="NCBIfam" id="TIGR01151">
    <property type="entry name" value="psbA"/>
    <property type="match status" value="1"/>
</dbReference>
<dbReference type="PANTHER" id="PTHR33149:SF12">
    <property type="entry name" value="PHOTOSYSTEM II D2 PROTEIN"/>
    <property type="match status" value="1"/>
</dbReference>
<dbReference type="PANTHER" id="PTHR33149">
    <property type="entry name" value="PHOTOSYSTEM II PROTEIN D1"/>
    <property type="match status" value="1"/>
</dbReference>
<dbReference type="Pfam" id="PF00124">
    <property type="entry name" value="Photo_RC"/>
    <property type="match status" value="1"/>
</dbReference>
<dbReference type="PRINTS" id="PR00256">
    <property type="entry name" value="REACTNCENTRE"/>
</dbReference>
<dbReference type="SUPFAM" id="SSF81483">
    <property type="entry name" value="Bacterial photosystem II reaction centre, L and M subunits"/>
    <property type="match status" value="1"/>
</dbReference>
<dbReference type="PROSITE" id="PS00244">
    <property type="entry name" value="REACTION_CENTER"/>
    <property type="match status" value="1"/>
</dbReference>
<accession>Q2JTM8</accession>
<organism>
    <name type="scientific">Synechococcus sp. (strain JA-3-3Ab)</name>
    <name type="common">Cyanobacteria bacterium Yellowstone A-Prime</name>
    <dbReference type="NCBI Taxonomy" id="321327"/>
    <lineage>
        <taxon>Bacteria</taxon>
        <taxon>Bacillati</taxon>
        <taxon>Cyanobacteriota</taxon>
        <taxon>Cyanophyceae</taxon>
        <taxon>Synechococcales</taxon>
        <taxon>Synechococcaceae</taxon>
        <taxon>Synechococcus</taxon>
    </lineage>
</organism>
<reference key="1">
    <citation type="journal article" date="2007" name="ISME J.">
        <title>Population level functional diversity in a microbial community revealed by comparative genomic and metagenomic analyses.</title>
        <authorList>
            <person name="Bhaya D."/>
            <person name="Grossman A.R."/>
            <person name="Steunou A.-S."/>
            <person name="Khuri N."/>
            <person name="Cohan F.M."/>
            <person name="Hamamura N."/>
            <person name="Melendrez M.C."/>
            <person name="Bateson M.M."/>
            <person name="Ward D.M."/>
            <person name="Heidelberg J.F."/>
        </authorList>
    </citation>
    <scope>NUCLEOTIDE SEQUENCE [LARGE SCALE GENOMIC DNA]</scope>
    <source>
        <strain>JA-3-3Ab</strain>
    </source>
</reference>
<keyword id="KW-0106">Calcium</keyword>
<keyword id="KW-0148">Chlorophyll</keyword>
<keyword id="KW-0157">Chromophore</keyword>
<keyword id="KW-0249">Electron transport</keyword>
<keyword id="KW-0359">Herbicide resistance</keyword>
<keyword id="KW-0408">Iron</keyword>
<keyword id="KW-0460">Magnesium</keyword>
<keyword id="KW-0464">Manganese</keyword>
<keyword id="KW-0472">Membrane</keyword>
<keyword id="KW-0479">Metal-binding</keyword>
<keyword id="KW-0560">Oxidoreductase</keyword>
<keyword id="KW-0602">Photosynthesis</keyword>
<keyword id="KW-0604">Photosystem II</keyword>
<keyword id="KW-0793">Thylakoid</keyword>
<keyword id="KW-0812">Transmembrane</keyword>
<keyword id="KW-1133">Transmembrane helix</keyword>
<keyword id="KW-0813">Transport</keyword>
<protein>
    <recommendedName>
        <fullName evidence="1">Photosystem II protein D1 3</fullName>
        <shortName evidence="1">PSII D1 protein 3</shortName>
        <ecNumber evidence="1">1.10.3.9</ecNumber>
    </recommendedName>
    <alternativeName>
        <fullName evidence="1">Photosystem II Q(B) protein 3</fullName>
    </alternativeName>
</protein>
<gene>
    <name evidence="1 2" type="primary">psbA3</name>
    <name type="ordered locus">CYA_1811</name>
</gene>
<comment type="function">
    <text evidence="1">Photosystem II (PSII) is a light-driven water:plastoquinone oxidoreductase that uses light energy to abstract electrons from H(2)O, generating O(2) and a proton gradient subsequently used for ATP formation. It consists of a core antenna complex that captures photons, and an electron transfer chain that converts photonic excitation into a charge separation. The D1/D2 (PsbA/PsbD) reaction center heterodimer binds P680, the primary electron donor of PSII as well as several subsequent electron acceptors.</text>
</comment>
<comment type="catalytic activity">
    <reaction evidence="1">
        <text>2 a plastoquinone + 4 hnu + 2 H2O = 2 a plastoquinol + O2</text>
        <dbReference type="Rhea" id="RHEA:36359"/>
        <dbReference type="Rhea" id="RHEA-COMP:9561"/>
        <dbReference type="Rhea" id="RHEA-COMP:9562"/>
        <dbReference type="ChEBI" id="CHEBI:15377"/>
        <dbReference type="ChEBI" id="CHEBI:15379"/>
        <dbReference type="ChEBI" id="CHEBI:17757"/>
        <dbReference type="ChEBI" id="CHEBI:30212"/>
        <dbReference type="ChEBI" id="CHEBI:62192"/>
        <dbReference type="EC" id="1.10.3.9"/>
    </reaction>
</comment>
<comment type="cofactor">
    <text evidence="1">The D1/D2 heterodimer binds P680, chlorophylls that are the primary electron donor of PSII, and subsequent electron acceptors. It shares a non-heme iron and each subunit binds pheophytin, quinone, additional chlorophylls, carotenoids and lipids. D1 provides most of the ligands for the Mn4-Ca-O5 cluster of the oxygen-evolving complex (OEC). There is also a Cl(-1) ion associated with D1 and D2, which is required for oxygen evolution. The PSII complex binds additional chlorophylls, carotenoids and specific lipids.</text>
</comment>
<comment type="subunit">
    <text evidence="1">PSII is composed of 1 copy each of membrane proteins PsbA, PsbB, PsbC, PsbD, PsbE, PsbF, PsbH, PsbI, PsbJ, PsbK, PsbL, PsbM, PsbT, PsbX, PsbY, PsbZ, Psb30/Ycf12, peripheral proteins PsbO, CyanoQ (PsbQ), PsbU, PsbV and a large number of cofactors. It forms dimeric complexes.</text>
</comment>
<comment type="subcellular location">
    <subcellularLocation>
        <location evidence="1">Cellular thylakoid membrane</location>
        <topology evidence="1">Multi-pass membrane protein</topology>
    </subcellularLocation>
</comment>
<comment type="PTM">
    <text evidence="1">Tyr-161 forms a radical intermediate that is referred to as redox-active TyrZ, YZ or Y-Z.</text>
</comment>
<comment type="PTM">
    <text evidence="1">C-terminally processed by CtpA; processing is essential to allow assembly of the oxygen-evolving complex and thus photosynthetic growth.</text>
</comment>
<comment type="miscellaneous">
    <text evidence="1">Cyanobacteria usually contain more than 2 copies of the psbA gene.</text>
</comment>
<comment type="miscellaneous">
    <text evidence="1">2 of the reaction center chlorophylls (ChlD1 and ChlD2) are entirely coordinated by water.</text>
</comment>
<comment type="miscellaneous">
    <text evidence="1">Herbicides such as atrazine, BNT, diuron or ioxynil bind in the Q(B) binding site and block subsequent electron transfer.</text>
</comment>
<comment type="similarity">
    <text evidence="1">Belongs to the reaction center PufL/M/PsbA/D family.</text>
</comment>
<sequence length="354" mass="39066">MTTVIQRRSTSNVWEQFCEWVTSTDNRLYIGWFGVLMIPTLLTATTCFIIAFIGAPPVDIDGIREPVSGSLLYGNNIITGAVVPSSAAIGLHFYPIWEAASLDEWLYNGGPYQLIVLHFLIGVFCYMGREWELSYRLGMRPWIAVAYSAPVAAATAVFLIYPIGQGSFSDGMPLGISGTFNFMLVFQAEHNILMHPFHQLGVAGVFGGALFSAMHGSLVTSSLIRETSEEESQNLGYKFGQEEETYNIVAAHGYFGRLIFQYASFNNSRSLHFFLAAWPVIGIWFTALGISIMAFNLNGFNFNQSIVDSNGRVVGTWADVLNRANLGMEVMHERNAHNFPLDLAAVEVAPAVRG</sequence>
<name>PSBA3_SYNJA</name>
<evidence type="ECO:0000255" key="1">
    <source>
        <dbReference type="HAMAP-Rule" id="MF_01379"/>
    </source>
</evidence>
<evidence type="ECO:0000305" key="2"/>